<dbReference type="EC" id="4.2.1.113" evidence="1"/>
<dbReference type="EMBL" id="CP001139">
    <property type="protein sequence ID" value="ACH65765.1"/>
    <property type="molecule type" value="Genomic_DNA"/>
</dbReference>
<dbReference type="RefSeq" id="WP_012533270.1">
    <property type="nucleotide sequence ID" value="NC_011184.1"/>
</dbReference>
<dbReference type="SMR" id="B5FFK8"/>
<dbReference type="KEGG" id="vfm:VFMJ11_1793"/>
<dbReference type="HOGENOM" id="CLU_030273_0_1_6"/>
<dbReference type="UniPathway" id="UPA00079"/>
<dbReference type="UniPathway" id="UPA01057">
    <property type="reaction ID" value="UER00165"/>
</dbReference>
<dbReference type="Proteomes" id="UP000001857">
    <property type="component" value="Chromosome I"/>
</dbReference>
<dbReference type="GO" id="GO:0000287">
    <property type="term" value="F:magnesium ion binding"/>
    <property type="evidence" value="ECO:0007669"/>
    <property type="project" value="UniProtKB-UniRule"/>
</dbReference>
<dbReference type="GO" id="GO:0043748">
    <property type="term" value="F:O-succinylbenzoate synthase activity"/>
    <property type="evidence" value="ECO:0007669"/>
    <property type="project" value="UniProtKB-EC"/>
</dbReference>
<dbReference type="GO" id="GO:0009234">
    <property type="term" value="P:menaquinone biosynthetic process"/>
    <property type="evidence" value="ECO:0007669"/>
    <property type="project" value="UniProtKB-UniRule"/>
</dbReference>
<dbReference type="CDD" id="cd03320">
    <property type="entry name" value="OSBS"/>
    <property type="match status" value="1"/>
</dbReference>
<dbReference type="Gene3D" id="3.20.20.120">
    <property type="entry name" value="Enolase-like C-terminal domain"/>
    <property type="match status" value="1"/>
</dbReference>
<dbReference type="Gene3D" id="3.30.390.10">
    <property type="entry name" value="Enolase-like, N-terminal domain"/>
    <property type="match status" value="1"/>
</dbReference>
<dbReference type="HAMAP" id="MF_00470">
    <property type="entry name" value="MenC_1"/>
    <property type="match status" value="1"/>
</dbReference>
<dbReference type="InterPro" id="IPR036849">
    <property type="entry name" value="Enolase-like_C_sf"/>
</dbReference>
<dbReference type="InterPro" id="IPR029017">
    <property type="entry name" value="Enolase-like_N"/>
</dbReference>
<dbReference type="InterPro" id="IPR029065">
    <property type="entry name" value="Enolase_C-like"/>
</dbReference>
<dbReference type="InterPro" id="IPR013342">
    <property type="entry name" value="Mandelate_racemase_C"/>
</dbReference>
<dbReference type="InterPro" id="IPR010196">
    <property type="entry name" value="OSB_synthase_MenC1"/>
</dbReference>
<dbReference type="InterPro" id="IPR041338">
    <property type="entry name" value="OSBS_N"/>
</dbReference>
<dbReference type="NCBIfam" id="TIGR01927">
    <property type="entry name" value="menC_gam_Gplu"/>
    <property type="match status" value="1"/>
</dbReference>
<dbReference type="NCBIfam" id="NF003473">
    <property type="entry name" value="PRK05105.1"/>
    <property type="match status" value="1"/>
</dbReference>
<dbReference type="PANTHER" id="PTHR48073:SF2">
    <property type="entry name" value="O-SUCCINYLBENZOATE SYNTHASE"/>
    <property type="match status" value="1"/>
</dbReference>
<dbReference type="PANTHER" id="PTHR48073">
    <property type="entry name" value="O-SUCCINYLBENZOATE SYNTHASE-RELATED"/>
    <property type="match status" value="1"/>
</dbReference>
<dbReference type="Pfam" id="PF21508">
    <property type="entry name" value="MenC_N"/>
    <property type="match status" value="1"/>
</dbReference>
<dbReference type="Pfam" id="PF13378">
    <property type="entry name" value="MR_MLE_C"/>
    <property type="match status" value="1"/>
</dbReference>
<dbReference type="SFLD" id="SFLDS00001">
    <property type="entry name" value="Enolase"/>
    <property type="match status" value="1"/>
</dbReference>
<dbReference type="SFLD" id="SFLDF00009">
    <property type="entry name" value="o-succinylbenzoate_synthase"/>
    <property type="match status" value="1"/>
</dbReference>
<dbReference type="SMART" id="SM00922">
    <property type="entry name" value="MR_MLE"/>
    <property type="match status" value="1"/>
</dbReference>
<dbReference type="SUPFAM" id="SSF51604">
    <property type="entry name" value="Enolase C-terminal domain-like"/>
    <property type="match status" value="1"/>
</dbReference>
<dbReference type="SUPFAM" id="SSF54826">
    <property type="entry name" value="Enolase N-terminal domain-like"/>
    <property type="match status" value="1"/>
</dbReference>
<reference key="1">
    <citation type="submission" date="2008-08" db="EMBL/GenBank/DDBJ databases">
        <title>Complete sequence of Vibrio fischeri strain MJ11.</title>
        <authorList>
            <person name="Mandel M.J."/>
            <person name="Stabb E.V."/>
            <person name="Ruby E.G."/>
            <person name="Ferriera S."/>
            <person name="Johnson J."/>
            <person name="Kravitz S."/>
            <person name="Beeson K."/>
            <person name="Sutton G."/>
            <person name="Rogers Y.-H."/>
            <person name="Friedman R."/>
            <person name="Frazier M."/>
            <person name="Venter J.C."/>
        </authorList>
    </citation>
    <scope>NUCLEOTIDE SEQUENCE [LARGE SCALE GENOMIC DNA]</scope>
    <source>
        <strain>MJ11</strain>
    </source>
</reference>
<keyword id="KW-0456">Lyase</keyword>
<keyword id="KW-0460">Magnesium</keyword>
<keyword id="KW-0474">Menaquinone biosynthesis</keyword>
<keyword id="KW-0479">Metal-binding</keyword>
<accession>B5FFK8</accession>
<feature type="chain" id="PRO_1000125587" description="o-succinylbenzoate synthase">
    <location>
        <begin position="1"/>
        <end position="324"/>
    </location>
</feature>
<feature type="active site" description="Proton donor" evidence="1">
    <location>
        <position position="135"/>
    </location>
</feature>
<feature type="active site" description="Proton acceptor" evidence="1">
    <location>
        <position position="237"/>
    </location>
</feature>
<feature type="binding site" evidence="1">
    <location>
        <position position="163"/>
    </location>
    <ligand>
        <name>Mg(2+)</name>
        <dbReference type="ChEBI" id="CHEBI:18420"/>
    </ligand>
</feature>
<feature type="binding site" evidence="1">
    <location>
        <position position="192"/>
    </location>
    <ligand>
        <name>Mg(2+)</name>
        <dbReference type="ChEBI" id="CHEBI:18420"/>
    </ligand>
</feature>
<feature type="binding site" evidence="1">
    <location>
        <position position="215"/>
    </location>
    <ligand>
        <name>Mg(2+)</name>
        <dbReference type="ChEBI" id="CHEBI:18420"/>
    </ligand>
</feature>
<proteinExistence type="inferred from homology"/>
<organism>
    <name type="scientific">Aliivibrio fischeri (strain MJ11)</name>
    <name type="common">Vibrio fischeri</name>
    <dbReference type="NCBI Taxonomy" id="388396"/>
    <lineage>
        <taxon>Bacteria</taxon>
        <taxon>Pseudomonadati</taxon>
        <taxon>Pseudomonadota</taxon>
        <taxon>Gammaproteobacteria</taxon>
        <taxon>Vibrionales</taxon>
        <taxon>Vibrionaceae</taxon>
        <taxon>Aliivibrio</taxon>
    </lineage>
</organism>
<protein>
    <recommendedName>
        <fullName evidence="1">o-succinylbenzoate synthase</fullName>
        <shortName evidence="1">OSB synthase</shortName>
        <shortName evidence="1">OSBS</shortName>
        <ecNumber evidence="1">4.2.1.113</ecNumber>
    </recommendedName>
    <alternativeName>
        <fullName evidence="1">4-(2'-carboxyphenyl)-4-oxybutyric acid synthase</fullName>
    </alternativeName>
    <alternativeName>
        <fullName evidence="1">o-succinylbenzoic acid synthase</fullName>
    </alternativeName>
</protein>
<gene>
    <name evidence="1" type="primary">menC</name>
    <name type="ordered locus">VFMJ11_1793</name>
</gene>
<name>MENC_ALIFM</name>
<sequence>MKTAKIYQYQLPMDSGVILREQRLQQRDGLVIELSDGIHTARGEVAPLPEFSQETLEQAREDLISLTQSWLNNEELDLDSNCPSVAFGFSMALLELEKQLPQEGNYQAAPLCSGDPDDLVVKLNEMSGKKIAKIKVGLYEPIRDGMVVNMFLELISDLSLRLDANRGWTTKKAEQFANYIHPQFRSRIEFLEEPCTTPEESLAFSKATNIAIAWDETVRDDGFTVETQEGVAAIVIKPTLVGSVEKCISLIEQAHQLGMQAVISSSIESSLALTQLARLAAWKTPETIPGLDTIDLFKMQLDTSWPNCDLPVAQLADLEVIWEN</sequence>
<comment type="function">
    <text evidence="1">Converts 2-succinyl-6-hydroxy-2,4-cyclohexadiene-1-carboxylate (SHCHC) to 2-succinylbenzoate (OSB).</text>
</comment>
<comment type="catalytic activity">
    <reaction evidence="1">
        <text>(1R,6R)-6-hydroxy-2-succinyl-cyclohexa-2,4-diene-1-carboxylate = 2-succinylbenzoate + H2O</text>
        <dbReference type="Rhea" id="RHEA:10196"/>
        <dbReference type="ChEBI" id="CHEBI:15377"/>
        <dbReference type="ChEBI" id="CHEBI:18325"/>
        <dbReference type="ChEBI" id="CHEBI:58689"/>
        <dbReference type="EC" id="4.2.1.113"/>
    </reaction>
</comment>
<comment type="cofactor">
    <cofactor evidence="1">
        <name>a divalent metal cation</name>
        <dbReference type="ChEBI" id="CHEBI:60240"/>
    </cofactor>
</comment>
<comment type="pathway">
    <text evidence="1">Quinol/quinone metabolism; 1,4-dihydroxy-2-naphthoate biosynthesis; 1,4-dihydroxy-2-naphthoate from chorismate: step 4/7.</text>
</comment>
<comment type="pathway">
    <text evidence="1">Quinol/quinone metabolism; menaquinone biosynthesis.</text>
</comment>
<comment type="similarity">
    <text evidence="1">Belongs to the mandelate racemase/muconate lactonizing enzyme family. MenC type 1 subfamily.</text>
</comment>
<evidence type="ECO:0000255" key="1">
    <source>
        <dbReference type="HAMAP-Rule" id="MF_00470"/>
    </source>
</evidence>